<reference key="1">
    <citation type="journal article" date="1997" name="J. Bacteriol.">
        <title>Complete genome sequence of Methanobacterium thermoautotrophicum deltaH: functional analysis and comparative genomics.</title>
        <authorList>
            <person name="Smith D.R."/>
            <person name="Doucette-Stamm L.A."/>
            <person name="Deloughery C."/>
            <person name="Lee H.-M."/>
            <person name="Dubois J."/>
            <person name="Aldredge T."/>
            <person name="Bashirzadeh R."/>
            <person name="Blakely D."/>
            <person name="Cook R."/>
            <person name="Gilbert K."/>
            <person name="Harrison D."/>
            <person name="Hoang L."/>
            <person name="Keagle P."/>
            <person name="Lumm W."/>
            <person name="Pothier B."/>
            <person name="Qiu D."/>
            <person name="Spadafora R."/>
            <person name="Vicare R."/>
            <person name="Wang Y."/>
            <person name="Wierzbowski J."/>
            <person name="Gibson R."/>
            <person name="Jiwani N."/>
            <person name="Caruso A."/>
            <person name="Bush D."/>
            <person name="Safer H."/>
            <person name="Patwell D."/>
            <person name="Prabhakar S."/>
            <person name="McDougall S."/>
            <person name="Shimer G."/>
            <person name="Goyal A."/>
            <person name="Pietrovski S."/>
            <person name="Church G.M."/>
            <person name="Daniels C.J."/>
            <person name="Mao J.-I."/>
            <person name="Rice P."/>
            <person name="Noelling J."/>
            <person name="Reeve J.N."/>
        </authorList>
    </citation>
    <scope>NUCLEOTIDE SEQUENCE [LARGE SCALE GENOMIC DNA]</scope>
    <source>
        <strain>ATCC 29096 / DSM 1053 / JCM 10044 / NBRC 100330 / Delta H</strain>
    </source>
</reference>
<organism>
    <name type="scientific">Methanothermobacter thermautotrophicus (strain ATCC 29096 / DSM 1053 / JCM 10044 / NBRC 100330 / Delta H)</name>
    <name type="common">Methanobacterium thermoautotrophicum</name>
    <dbReference type="NCBI Taxonomy" id="187420"/>
    <lineage>
        <taxon>Archaea</taxon>
        <taxon>Methanobacteriati</taxon>
        <taxon>Methanobacteriota</taxon>
        <taxon>Methanomada group</taxon>
        <taxon>Methanobacteria</taxon>
        <taxon>Methanobacteriales</taxon>
        <taxon>Methanobacteriaceae</taxon>
        <taxon>Methanothermobacter</taxon>
    </lineage>
</organism>
<proteinExistence type="inferred from homology"/>
<evidence type="ECO:0000255" key="1">
    <source>
        <dbReference type="HAMAP-Rule" id="MF_01341"/>
    </source>
</evidence>
<evidence type="ECO:0000256" key="2">
    <source>
        <dbReference type="SAM" id="MobiDB-lite"/>
    </source>
</evidence>
<evidence type="ECO:0000305" key="3"/>
<name>RL15_METTH</name>
<feature type="chain" id="PRO_0000104862" description="Large ribosomal subunit protein uL15">
    <location>
        <begin position="1"/>
        <end position="146"/>
    </location>
</feature>
<feature type="region of interest" description="Disordered" evidence="2">
    <location>
        <begin position="1"/>
        <end position="38"/>
    </location>
</feature>
<feature type="compositionally biased region" description="Basic residues" evidence="2">
    <location>
        <begin position="1"/>
        <end position="13"/>
    </location>
</feature>
<feature type="compositionally biased region" description="Basic residues" evidence="2">
    <location>
        <begin position="22"/>
        <end position="38"/>
    </location>
</feature>
<accession>O26133</accession>
<protein>
    <recommendedName>
        <fullName evidence="1">Large ribosomal subunit protein uL15</fullName>
    </recommendedName>
    <alternativeName>
        <fullName evidence="3">50S ribosomal protein L15</fullName>
    </alternativeName>
</protein>
<gene>
    <name evidence="1" type="primary">rpl15</name>
    <name type="ordered locus">MTH_25</name>
</gene>
<sequence length="146" mass="16540">MIRKRRKITRMRGSRTVGGGCSKKRRGAGHRGGRGQAGGHKHHWTWIVKYDPKHFGKYGFKRPQKLIKRLETVNLAYLDEMIPELLERGVASEEDGMVVLDVRDLGFEKVLGSGRITRPVHLKAYEFSRSATEKIEEAGGKAEVIE</sequence>
<dbReference type="EMBL" id="AE000666">
    <property type="protein sequence ID" value="AAB84534.1"/>
    <property type="molecule type" value="Genomic_DNA"/>
</dbReference>
<dbReference type="PIR" id="C69131">
    <property type="entry name" value="C69131"/>
</dbReference>
<dbReference type="RefSeq" id="WP_010875667.1">
    <property type="nucleotide sequence ID" value="NC_000916.1"/>
</dbReference>
<dbReference type="SMR" id="O26133"/>
<dbReference type="FunCoup" id="O26133">
    <property type="interactions" value="143"/>
</dbReference>
<dbReference type="STRING" id="187420.MTH_25"/>
<dbReference type="PaxDb" id="187420-MTH_25"/>
<dbReference type="EnsemblBacteria" id="AAB84534">
    <property type="protein sequence ID" value="AAB84534"/>
    <property type="gene ID" value="MTH_25"/>
</dbReference>
<dbReference type="KEGG" id="mth:MTH_25"/>
<dbReference type="PATRIC" id="fig|187420.15.peg.25"/>
<dbReference type="HOGENOM" id="CLU_109163_0_0_2"/>
<dbReference type="InParanoid" id="O26133"/>
<dbReference type="Proteomes" id="UP000005223">
    <property type="component" value="Chromosome"/>
</dbReference>
<dbReference type="GO" id="GO:0022625">
    <property type="term" value="C:cytosolic large ribosomal subunit"/>
    <property type="evidence" value="ECO:0007669"/>
    <property type="project" value="TreeGrafter"/>
</dbReference>
<dbReference type="GO" id="GO:0019843">
    <property type="term" value="F:rRNA binding"/>
    <property type="evidence" value="ECO:0007669"/>
    <property type="project" value="UniProtKB-UniRule"/>
</dbReference>
<dbReference type="GO" id="GO:0003735">
    <property type="term" value="F:structural constituent of ribosome"/>
    <property type="evidence" value="ECO:0007669"/>
    <property type="project" value="InterPro"/>
</dbReference>
<dbReference type="GO" id="GO:0006412">
    <property type="term" value="P:translation"/>
    <property type="evidence" value="ECO:0007669"/>
    <property type="project" value="UniProtKB-UniRule"/>
</dbReference>
<dbReference type="Gene3D" id="3.100.10.10">
    <property type="match status" value="1"/>
</dbReference>
<dbReference type="Gene3D" id="4.10.990.10">
    <property type="match status" value="1"/>
</dbReference>
<dbReference type="HAMAP" id="MF_01341">
    <property type="entry name" value="Ribosomal_uL15"/>
    <property type="match status" value="1"/>
</dbReference>
<dbReference type="InterPro" id="IPR027386">
    <property type="entry name" value="Rbsml_uL15_N"/>
</dbReference>
<dbReference type="InterPro" id="IPR030878">
    <property type="entry name" value="Ribosomal_uL15"/>
</dbReference>
<dbReference type="InterPro" id="IPR021131">
    <property type="entry name" value="Ribosomal_uL15/eL18"/>
</dbReference>
<dbReference type="InterPro" id="IPR036227">
    <property type="entry name" value="Ribosomal_uL15/eL18_sf"/>
</dbReference>
<dbReference type="InterPro" id="IPR001196">
    <property type="entry name" value="Ribosomal_uL15_CS"/>
</dbReference>
<dbReference type="PANTHER" id="PTHR11721">
    <property type="entry name" value="60S RIBOSOMAL PROTEIN L27A"/>
    <property type="match status" value="1"/>
</dbReference>
<dbReference type="PANTHER" id="PTHR11721:SF3">
    <property type="entry name" value="LARGE RIBOSOMAL SUBUNIT PROTEIN UL15"/>
    <property type="match status" value="1"/>
</dbReference>
<dbReference type="Pfam" id="PF00828">
    <property type="entry name" value="Ribosomal_L27A"/>
    <property type="match status" value="1"/>
</dbReference>
<dbReference type="SUPFAM" id="SSF52080">
    <property type="entry name" value="Ribosomal proteins L15p and L18e"/>
    <property type="match status" value="1"/>
</dbReference>
<dbReference type="PROSITE" id="PS00475">
    <property type="entry name" value="RIBOSOMAL_L15"/>
    <property type="match status" value="1"/>
</dbReference>
<comment type="function">
    <text evidence="1">Binds to the 23S rRNA.</text>
</comment>
<comment type="subunit">
    <text evidence="1">Part of the 50S ribosomal subunit.</text>
</comment>
<comment type="similarity">
    <text evidence="1">Belongs to the universal ribosomal protein uL15 family.</text>
</comment>
<keyword id="KW-1185">Reference proteome</keyword>
<keyword id="KW-0687">Ribonucleoprotein</keyword>
<keyword id="KW-0689">Ribosomal protein</keyword>
<keyword id="KW-0694">RNA-binding</keyword>
<keyword id="KW-0699">rRNA-binding</keyword>